<name>TARI2_STAAM</name>
<protein>
    <recommendedName>
        <fullName evidence="1">Ribitol-5-phosphate cytidylyltransferase 2</fullName>
        <ecNumber evidence="1">2.7.7.40</ecNumber>
    </recommendedName>
</protein>
<accession>P65176</accession>
<accession>Q99WX2</accession>
<gene>
    <name evidence="1" type="primary">tarI2</name>
    <name type="ordered locus">SAV0251</name>
</gene>
<organism>
    <name type="scientific">Staphylococcus aureus (strain Mu50 / ATCC 700699)</name>
    <dbReference type="NCBI Taxonomy" id="158878"/>
    <lineage>
        <taxon>Bacteria</taxon>
        <taxon>Bacillati</taxon>
        <taxon>Bacillota</taxon>
        <taxon>Bacilli</taxon>
        <taxon>Bacillales</taxon>
        <taxon>Staphylococcaceae</taxon>
        <taxon>Staphylococcus</taxon>
    </lineage>
</organism>
<comment type="function">
    <text evidence="1">Catalyzes the transfer of the cytidylyl group of CTP to D-ribitol 5-phosphate.</text>
</comment>
<comment type="catalytic activity">
    <reaction evidence="1">
        <text>D-ribitol 5-phosphate + CTP + H(+) = CDP-L-ribitol + diphosphate</text>
        <dbReference type="Rhea" id="RHEA:12456"/>
        <dbReference type="ChEBI" id="CHEBI:15378"/>
        <dbReference type="ChEBI" id="CHEBI:33019"/>
        <dbReference type="ChEBI" id="CHEBI:37563"/>
        <dbReference type="ChEBI" id="CHEBI:57608"/>
        <dbReference type="ChEBI" id="CHEBI:57695"/>
        <dbReference type="EC" id="2.7.7.40"/>
    </reaction>
</comment>
<comment type="pathway">
    <text evidence="1">Cell wall biogenesis; poly(ribitol phosphate) teichoic acid biosynthesis.</text>
</comment>
<comment type="similarity">
    <text evidence="1">Belongs to the IspD/TarI cytidylyltransferase family. TarI subfamily.</text>
</comment>
<feature type="chain" id="PRO_0000075615" description="Ribitol-5-phosphate cytidylyltransferase 2">
    <location>
        <begin position="1"/>
        <end position="238"/>
    </location>
</feature>
<feature type="binding site" evidence="1">
    <location>
        <begin position="7"/>
        <end position="10"/>
    </location>
    <ligand>
        <name>CTP</name>
        <dbReference type="ChEBI" id="CHEBI:37563"/>
    </ligand>
</feature>
<feature type="binding site" evidence="1">
    <location>
        <begin position="81"/>
        <end position="87"/>
    </location>
    <ligand>
        <name>CTP</name>
        <dbReference type="ChEBI" id="CHEBI:37563"/>
    </ligand>
</feature>
<feature type="site" description="Transition state stabilizer" evidence="1">
    <location>
        <position position="14"/>
    </location>
</feature>
<feature type="site" description="Transition state stabilizer" evidence="1">
    <location>
        <position position="22"/>
    </location>
</feature>
<feature type="site" description="Positions ribitol 5-phosphate for the nucleophilic attack" evidence="1">
    <location>
        <position position="160"/>
    </location>
</feature>
<feature type="site" description="Positions ribitol 5-phosphate for the nucleophilic attack" evidence="1">
    <location>
        <position position="217"/>
    </location>
</feature>
<sequence>MIYAGILAGGIGSRMGNVPLPKQFLDIDNKPILIHTIEKFILVSEFNEIIIATPAQWISHTQDILKKYNITDQRVKVVAGGTDRNETIMNIIDHIRNVNGINNDDVIVTHDAVRPFLTQRIIKENIEVAAKYGAVDTVIEAIDTIVMSKDKQNIHSIPVRNEMYQGQTPQSFNIKLLQDSYRALSSEQKEILSDACKIIVESGHAVKLVRGELYNIKVTTPYDLKVANAIIQGDIADD</sequence>
<reference key="1">
    <citation type="journal article" date="2001" name="Lancet">
        <title>Whole genome sequencing of meticillin-resistant Staphylococcus aureus.</title>
        <authorList>
            <person name="Kuroda M."/>
            <person name="Ohta T."/>
            <person name="Uchiyama I."/>
            <person name="Baba T."/>
            <person name="Yuzawa H."/>
            <person name="Kobayashi I."/>
            <person name="Cui L."/>
            <person name="Oguchi A."/>
            <person name="Aoki K."/>
            <person name="Nagai Y."/>
            <person name="Lian J.-Q."/>
            <person name="Ito T."/>
            <person name="Kanamori M."/>
            <person name="Matsumaru H."/>
            <person name="Maruyama A."/>
            <person name="Murakami H."/>
            <person name="Hosoyama A."/>
            <person name="Mizutani-Ui Y."/>
            <person name="Takahashi N.K."/>
            <person name="Sawano T."/>
            <person name="Inoue R."/>
            <person name="Kaito C."/>
            <person name="Sekimizu K."/>
            <person name="Hirakawa H."/>
            <person name="Kuhara S."/>
            <person name="Goto S."/>
            <person name="Yabuzaki J."/>
            <person name="Kanehisa M."/>
            <person name="Yamashita A."/>
            <person name="Oshima K."/>
            <person name="Furuya K."/>
            <person name="Yoshino C."/>
            <person name="Shiba T."/>
            <person name="Hattori M."/>
            <person name="Ogasawara N."/>
            <person name="Hayashi H."/>
            <person name="Hiramatsu K."/>
        </authorList>
    </citation>
    <scope>NUCLEOTIDE SEQUENCE [LARGE SCALE GENOMIC DNA]</scope>
    <source>
        <strain>Mu50 / ATCC 700699</strain>
    </source>
</reference>
<dbReference type="EC" id="2.7.7.40" evidence="1"/>
<dbReference type="EMBL" id="BA000017">
    <property type="protein sequence ID" value="BAB56413.1"/>
    <property type="molecule type" value="Genomic_DNA"/>
</dbReference>
<dbReference type="RefSeq" id="WP_000638475.1">
    <property type="nucleotide sequence ID" value="NC_002758.2"/>
</dbReference>
<dbReference type="SMR" id="P65176"/>
<dbReference type="KEGG" id="sav:SAV0251"/>
<dbReference type="HOGENOM" id="CLU_061281_2_3_9"/>
<dbReference type="PhylomeDB" id="P65176"/>
<dbReference type="UniPathway" id="UPA00790"/>
<dbReference type="Proteomes" id="UP000002481">
    <property type="component" value="Chromosome"/>
</dbReference>
<dbReference type="GO" id="GO:0050518">
    <property type="term" value="F:2-C-methyl-D-erythritol 4-phosphate cytidylyltransferase activity"/>
    <property type="evidence" value="ECO:0007669"/>
    <property type="project" value="TreeGrafter"/>
</dbReference>
<dbReference type="GO" id="GO:0047349">
    <property type="term" value="F:D-ribitol-5-phosphate cytidylyltransferase activity"/>
    <property type="evidence" value="ECO:0007669"/>
    <property type="project" value="UniProtKB-UniRule"/>
</dbReference>
<dbReference type="GO" id="GO:0071555">
    <property type="term" value="P:cell wall organization"/>
    <property type="evidence" value="ECO:0007669"/>
    <property type="project" value="UniProtKB-KW"/>
</dbReference>
<dbReference type="GO" id="GO:0008299">
    <property type="term" value="P:isoprenoid biosynthetic process"/>
    <property type="evidence" value="ECO:0007669"/>
    <property type="project" value="InterPro"/>
</dbReference>
<dbReference type="GO" id="GO:1902012">
    <property type="term" value="P:poly(ribitol phosphate) teichoic acid biosynthetic process"/>
    <property type="evidence" value="ECO:0007669"/>
    <property type="project" value="UniProtKB-UniRule"/>
</dbReference>
<dbReference type="CDD" id="cd02516">
    <property type="entry name" value="CDP-ME_synthetase"/>
    <property type="match status" value="1"/>
</dbReference>
<dbReference type="FunFam" id="3.90.550.10:FF:000003">
    <property type="entry name" value="2-C-methyl-D-erythritol 4-phosphate cytidylyltransferase"/>
    <property type="match status" value="1"/>
</dbReference>
<dbReference type="Gene3D" id="3.90.550.10">
    <property type="entry name" value="Spore Coat Polysaccharide Biosynthesis Protein SpsA, Chain A"/>
    <property type="match status" value="1"/>
</dbReference>
<dbReference type="HAMAP" id="MF_02068">
    <property type="entry name" value="TarI"/>
    <property type="match status" value="1"/>
</dbReference>
<dbReference type="InterPro" id="IPR034683">
    <property type="entry name" value="IspD/TarI"/>
</dbReference>
<dbReference type="InterPro" id="IPR050088">
    <property type="entry name" value="IspD/TarI_cytidylyltransf_bact"/>
</dbReference>
<dbReference type="InterPro" id="IPR018294">
    <property type="entry name" value="ISPD_synthase_CS"/>
</dbReference>
<dbReference type="InterPro" id="IPR029044">
    <property type="entry name" value="Nucleotide-diphossugar_trans"/>
</dbReference>
<dbReference type="InterPro" id="IPR034709">
    <property type="entry name" value="TarI"/>
</dbReference>
<dbReference type="NCBIfam" id="NF001183">
    <property type="entry name" value="PRK00155.1-3"/>
    <property type="match status" value="1"/>
</dbReference>
<dbReference type="NCBIfam" id="NF009924">
    <property type="entry name" value="PRK13385.1"/>
    <property type="match status" value="1"/>
</dbReference>
<dbReference type="PANTHER" id="PTHR32125">
    <property type="entry name" value="2-C-METHYL-D-ERYTHRITOL 4-PHOSPHATE CYTIDYLYLTRANSFERASE, CHLOROPLASTIC"/>
    <property type="match status" value="1"/>
</dbReference>
<dbReference type="PANTHER" id="PTHR32125:SF8">
    <property type="entry name" value="RIBITOL-5-PHOSPHATE CYTIDYLYLTRANSFERASE"/>
    <property type="match status" value="1"/>
</dbReference>
<dbReference type="Pfam" id="PF01128">
    <property type="entry name" value="IspD"/>
    <property type="match status" value="1"/>
</dbReference>
<dbReference type="SUPFAM" id="SSF53448">
    <property type="entry name" value="Nucleotide-diphospho-sugar transferases"/>
    <property type="match status" value="1"/>
</dbReference>
<dbReference type="PROSITE" id="PS01295">
    <property type="entry name" value="ISPD"/>
    <property type="match status" value="1"/>
</dbReference>
<evidence type="ECO:0000255" key="1">
    <source>
        <dbReference type="HAMAP-Rule" id="MF_02068"/>
    </source>
</evidence>
<keyword id="KW-0961">Cell wall biogenesis/degradation</keyword>
<keyword id="KW-0548">Nucleotidyltransferase</keyword>
<keyword id="KW-0777">Teichoic acid biosynthesis</keyword>
<keyword id="KW-0808">Transferase</keyword>
<proteinExistence type="inferred from homology"/>